<name>TRI67_MOUSE</name>
<evidence type="ECO:0000250" key="1"/>
<evidence type="ECO:0000255" key="2"/>
<evidence type="ECO:0000255" key="3">
    <source>
        <dbReference type="PROSITE-ProRule" id="PRU00024"/>
    </source>
</evidence>
<evidence type="ECO:0000255" key="4">
    <source>
        <dbReference type="PROSITE-ProRule" id="PRU00316"/>
    </source>
</evidence>
<evidence type="ECO:0000255" key="5">
    <source>
        <dbReference type="PROSITE-ProRule" id="PRU00548"/>
    </source>
</evidence>
<evidence type="ECO:0000255" key="6">
    <source>
        <dbReference type="PROSITE-ProRule" id="PRU00586"/>
    </source>
</evidence>
<evidence type="ECO:0000256" key="7">
    <source>
        <dbReference type="SAM" id="MobiDB-lite"/>
    </source>
</evidence>
<organism>
    <name type="scientific">Mus musculus</name>
    <name type="common">Mouse</name>
    <dbReference type="NCBI Taxonomy" id="10090"/>
    <lineage>
        <taxon>Eukaryota</taxon>
        <taxon>Metazoa</taxon>
        <taxon>Chordata</taxon>
        <taxon>Craniata</taxon>
        <taxon>Vertebrata</taxon>
        <taxon>Euteleostomi</taxon>
        <taxon>Mammalia</taxon>
        <taxon>Eutheria</taxon>
        <taxon>Euarchontoglires</taxon>
        <taxon>Glires</taxon>
        <taxon>Rodentia</taxon>
        <taxon>Myomorpha</taxon>
        <taxon>Muroidea</taxon>
        <taxon>Muridae</taxon>
        <taxon>Murinae</taxon>
        <taxon>Mus</taxon>
        <taxon>Mus</taxon>
    </lineage>
</organism>
<reference key="1">
    <citation type="journal article" date="2004" name="Genome Res.">
        <title>The status, quality, and expansion of the NIH full-length cDNA project: the Mammalian Gene Collection (MGC).</title>
        <authorList>
            <consortium name="The MGC Project Team"/>
        </authorList>
    </citation>
    <scope>NUCLEOTIDE SEQUENCE [LARGE SCALE MRNA]</scope>
    <source>
        <strain>C57BL/6J</strain>
        <tissue>Brain</tissue>
    </source>
</reference>
<accession>Q505D9</accession>
<protein>
    <recommendedName>
        <fullName>Tripartite motif-containing protein 67</fullName>
    </recommendedName>
</protein>
<dbReference type="EMBL" id="BC094596">
    <property type="protein sequence ID" value="AAH94596.1"/>
    <property type="molecule type" value="mRNA"/>
</dbReference>
<dbReference type="CCDS" id="CCDS52704.1"/>
<dbReference type="RefSeq" id="NP_941034.2">
    <property type="nucleotide sequence ID" value="NM_198632.2"/>
</dbReference>
<dbReference type="BioGRID" id="237039">
    <property type="interactions" value="8"/>
</dbReference>
<dbReference type="FunCoup" id="Q505D9">
    <property type="interactions" value="482"/>
</dbReference>
<dbReference type="IntAct" id="Q505D9">
    <property type="interactions" value="1"/>
</dbReference>
<dbReference type="STRING" id="10090.ENSMUSP00000130343"/>
<dbReference type="GlyGen" id="Q505D9">
    <property type="glycosylation" value="6 sites, 1 O-linked glycan (3 sites)"/>
</dbReference>
<dbReference type="iPTMnet" id="Q505D9"/>
<dbReference type="PhosphoSitePlus" id="Q505D9"/>
<dbReference type="SwissPalm" id="Q505D9"/>
<dbReference type="PaxDb" id="10090-ENSMUSP00000040601"/>
<dbReference type="PeptideAtlas" id="Q505D9"/>
<dbReference type="ProteomicsDB" id="259330"/>
<dbReference type="Antibodypedia" id="34683">
    <property type="antibodies" value="38 antibodies from 16 providers"/>
</dbReference>
<dbReference type="Ensembl" id="ENSMUST00000041106.9">
    <property type="protein sequence ID" value="ENSMUSP00000040601.8"/>
    <property type="gene ID" value="ENSMUSG00000036913.16"/>
</dbReference>
<dbReference type="Ensembl" id="ENSMUST00000167588.9">
    <property type="protein sequence ID" value="ENSMUSP00000130343.2"/>
    <property type="gene ID" value="ENSMUSG00000036913.16"/>
</dbReference>
<dbReference type="Ensembl" id="ENSMUST00000211867.2">
    <property type="protein sequence ID" value="ENSMUSP00000148625.2"/>
    <property type="gene ID" value="ENSMUSG00000036913.16"/>
</dbReference>
<dbReference type="GeneID" id="330863"/>
<dbReference type="KEGG" id="mmu:330863"/>
<dbReference type="UCSC" id="uc012gmz.1">
    <property type="organism name" value="mouse"/>
</dbReference>
<dbReference type="AGR" id="MGI:3045323"/>
<dbReference type="CTD" id="440730"/>
<dbReference type="MGI" id="MGI:3045323">
    <property type="gene designation" value="Trim67"/>
</dbReference>
<dbReference type="VEuPathDB" id="HostDB:ENSMUSG00000036913"/>
<dbReference type="eggNOG" id="KOG4367">
    <property type="taxonomic scope" value="Eukaryota"/>
</dbReference>
<dbReference type="GeneTree" id="ENSGT00940000154071"/>
<dbReference type="HOGENOM" id="CLU_013137_19_2_1"/>
<dbReference type="InParanoid" id="Q505D9"/>
<dbReference type="OMA" id="GKHAKHE"/>
<dbReference type="PhylomeDB" id="Q505D9"/>
<dbReference type="TreeFam" id="TF315216"/>
<dbReference type="BioGRID-ORCS" id="330863">
    <property type="hits" value="2 hits in 77 CRISPR screens"/>
</dbReference>
<dbReference type="ChiTaRS" id="Trim67">
    <property type="organism name" value="mouse"/>
</dbReference>
<dbReference type="PRO" id="PR:Q505D9"/>
<dbReference type="Proteomes" id="UP000000589">
    <property type="component" value="Chromosome 8"/>
</dbReference>
<dbReference type="RNAct" id="Q505D9">
    <property type="molecule type" value="protein"/>
</dbReference>
<dbReference type="Bgee" id="ENSMUSG00000036913">
    <property type="expression patterns" value="Expressed in cortical plate and 71 other cell types or tissues"/>
</dbReference>
<dbReference type="GO" id="GO:0005737">
    <property type="term" value="C:cytoplasm"/>
    <property type="evidence" value="ECO:0000314"/>
    <property type="project" value="MGI"/>
</dbReference>
<dbReference type="GO" id="GO:0005856">
    <property type="term" value="C:cytoskeleton"/>
    <property type="evidence" value="ECO:0007669"/>
    <property type="project" value="UniProtKB-SubCell"/>
</dbReference>
<dbReference type="GO" id="GO:0008270">
    <property type="term" value="F:zinc ion binding"/>
    <property type="evidence" value="ECO:0007669"/>
    <property type="project" value="UniProtKB-KW"/>
</dbReference>
<dbReference type="GO" id="GO:0046580">
    <property type="term" value="P:negative regulation of Ras protein signal transduction"/>
    <property type="evidence" value="ECO:0000315"/>
    <property type="project" value="MGI"/>
</dbReference>
<dbReference type="GO" id="GO:0010976">
    <property type="term" value="P:positive regulation of neuron projection development"/>
    <property type="evidence" value="ECO:0000314"/>
    <property type="project" value="MGI"/>
</dbReference>
<dbReference type="GO" id="GO:2000060">
    <property type="term" value="P:positive regulation of ubiquitin-dependent protein catabolic process"/>
    <property type="evidence" value="ECO:0000314"/>
    <property type="project" value="MGI"/>
</dbReference>
<dbReference type="CDD" id="cd19844">
    <property type="entry name" value="Bbox1_TRIM67_C-I"/>
    <property type="match status" value="1"/>
</dbReference>
<dbReference type="CDD" id="cd19827">
    <property type="entry name" value="Bbox2_TRIM67_C-I"/>
    <property type="match status" value="1"/>
</dbReference>
<dbReference type="CDD" id="cd00063">
    <property type="entry name" value="FN3"/>
    <property type="match status" value="1"/>
</dbReference>
<dbReference type="CDD" id="cd16758">
    <property type="entry name" value="RING-HC_TRIM67"/>
    <property type="match status" value="1"/>
</dbReference>
<dbReference type="CDD" id="cd12889">
    <property type="entry name" value="SPRY_PRY_TRIM67_9"/>
    <property type="match status" value="1"/>
</dbReference>
<dbReference type="FunFam" id="2.60.120.920:FF:000009">
    <property type="entry name" value="E3 ubiquitin-protein ligase TRIM9 isoform X1"/>
    <property type="match status" value="1"/>
</dbReference>
<dbReference type="FunFam" id="2.60.40.10:FF:000178">
    <property type="entry name" value="E3 ubiquitin-protein ligase TRIM9 isoform X1"/>
    <property type="match status" value="1"/>
</dbReference>
<dbReference type="FunFam" id="4.10.830.40:FF:000001">
    <property type="entry name" value="E3 ubiquitin-protein ligase TRIM9 isoform X1"/>
    <property type="match status" value="1"/>
</dbReference>
<dbReference type="FunFam" id="1.20.5.170:FF:000017">
    <property type="entry name" value="Putative E3 ubiquitin-protein ligase TRIM9"/>
    <property type="match status" value="1"/>
</dbReference>
<dbReference type="FunFam" id="3.30.40.10:FF:000579">
    <property type="entry name" value="Tripartite motif-containing protein 67"/>
    <property type="match status" value="1"/>
</dbReference>
<dbReference type="Gene3D" id="1.20.5.170">
    <property type="match status" value="1"/>
</dbReference>
<dbReference type="Gene3D" id="2.60.120.920">
    <property type="match status" value="1"/>
</dbReference>
<dbReference type="Gene3D" id="4.10.830.40">
    <property type="match status" value="1"/>
</dbReference>
<dbReference type="Gene3D" id="3.30.160.60">
    <property type="entry name" value="Classic Zinc Finger"/>
    <property type="match status" value="1"/>
</dbReference>
<dbReference type="Gene3D" id="2.60.40.10">
    <property type="entry name" value="Immunoglobulins"/>
    <property type="match status" value="1"/>
</dbReference>
<dbReference type="Gene3D" id="3.30.40.10">
    <property type="entry name" value="Zinc/RING finger domain, C3HC4 (zinc finger)"/>
    <property type="match status" value="1"/>
</dbReference>
<dbReference type="InterPro" id="IPR001870">
    <property type="entry name" value="B30.2/SPRY"/>
</dbReference>
<dbReference type="InterPro" id="IPR043136">
    <property type="entry name" value="B30.2/SPRY_sf"/>
</dbReference>
<dbReference type="InterPro" id="IPR003649">
    <property type="entry name" value="Bbox_C"/>
</dbReference>
<dbReference type="InterPro" id="IPR013320">
    <property type="entry name" value="ConA-like_dom_sf"/>
</dbReference>
<dbReference type="InterPro" id="IPR017903">
    <property type="entry name" value="COS_domain"/>
</dbReference>
<dbReference type="InterPro" id="IPR050617">
    <property type="entry name" value="E3_ligase_FN3/SPRY"/>
</dbReference>
<dbReference type="InterPro" id="IPR003961">
    <property type="entry name" value="FN3_dom"/>
</dbReference>
<dbReference type="InterPro" id="IPR036116">
    <property type="entry name" value="FN3_sf"/>
</dbReference>
<dbReference type="InterPro" id="IPR013783">
    <property type="entry name" value="Ig-like_fold"/>
</dbReference>
<dbReference type="InterPro" id="IPR003877">
    <property type="entry name" value="SPRY_dom"/>
</dbReference>
<dbReference type="InterPro" id="IPR000315">
    <property type="entry name" value="Znf_B-box"/>
</dbReference>
<dbReference type="InterPro" id="IPR001841">
    <property type="entry name" value="Znf_RING"/>
</dbReference>
<dbReference type="InterPro" id="IPR013083">
    <property type="entry name" value="Znf_RING/FYVE/PHD"/>
</dbReference>
<dbReference type="InterPro" id="IPR017907">
    <property type="entry name" value="Znf_RING_CS"/>
</dbReference>
<dbReference type="PANTHER" id="PTHR24099">
    <property type="entry name" value="E3 UBIQUITIN-PROTEIN LIGASE TRIM36-RELATED"/>
    <property type="match status" value="1"/>
</dbReference>
<dbReference type="PANTHER" id="PTHR24099:SF21">
    <property type="entry name" value="TRIPARTITE MOTIF-CONTAINING PROTEIN 67"/>
    <property type="match status" value="1"/>
</dbReference>
<dbReference type="Pfam" id="PF22586">
    <property type="entry name" value="ANCHR-like_BBOX"/>
    <property type="match status" value="1"/>
</dbReference>
<dbReference type="Pfam" id="PF00041">
    <property type="entry name" value="fn3"/>
    <property type="match status" value="1"/>
</dbReference>
<dbReference type="Pfam" id="PF00622">
    <property type="entry name" value="SPRY"/>
    <property type="match status" value="1"/>
</dbReference>
<dbReference type="Pfam" id="PF00643">
    <property type="entry name" value="zf-B_box"/>
    <property type="match status" value="1"/>
</dbReference>
<dbReference type="SMART" id="SM00502">
    <property type="entry name" value="BBC"/>
    <property type="match status" value="1"/>
</dbReference>
<dbReference type="SMART" id="SM00336">
    <property type="entry name" value="BBOX"/>
    <property type="match status" value="2"/>
</dbReference>
<dbReference type="SMART" id="SM00060">
    <property type="entry name" value="FN3"/>
    <property type="match status" value="1"/>
</dbReference>
<dbReference type="SMART" id="SM00184">
    <property type="entry name" value="RING"/>
    <property type="match status" value="1"/>
</dbReference>
<dbReference type="SMART" id="SM00449">
    <property type="entry name" value="SPRY"/>
    <property type="match status" value="1"/>
</dbReference>
<dbReference type="SUPFAM" id="SSF57845">
    <property type="entry name" value="B-box zinc-binding domain"/>
    <property type="match status" value="1"/>
</dbReference>
<dbReference type="SUPFAM" id="SSF49899">
    <property type="entry name" value="Concanavalin A-like lectins/glucanases"/>
    <property type="match status" value="1"/>
</dbReference>
<dbReference type="SUPFAM" id="SSF49265">
    <property type="entry name" value="Fibronectin type III"/>
    <property type="match status" value="1"/>
</dbReference>
<dbReference type="SUPFAM" id="SSF57850">
    <property type="entry name" value="RING/U-box"/>
    <property type="match status" value="1"/>
</dbReference>
<dbReference type="PROSITE" id="PS50188">
    <property type="entry name" value="B302_SPRY"/>
    <property type="match status" value="1"/>
</dbReference>
<dbReference type="PROSITE" id="PS51262">
    <property type="entry name" value="COS"/>
    <property type="match status" value="1"/>
</dbReference>
<dbReference type="PROSITE" id="PS50853">
    <property type="entry name" value="FN3"/>
    <property type="match status" value="1"/>
</dbReference>
<dbReference type="PROSITE" id="PS50119">
    <property type="entry name" value="ZF_BBOX"/>
    <property type="match status" value="2"/>
</dbReference>
<dbReference type="PROSITE" id="PS00518">
    <property type="entry name" value="ZF_RING_1"/>
    <property type="match status" value="1"/>
</dbReference>
<keyword id="KW-0175">Coiled coil</keyword>
<keyword id="KW-0963">Cytoplasm</keyword>
<keyword id="KW-0206">Cytoskeleton</keyword>
<keyword id="KW-0479">Metal-binding</keyword>
<keyword id="KW-1185">Reference proteome</keyword>
<keyword id="KW-0677">Repeat</keyword>
<keyword id="KW-0862">Zinc</keyword>
<keyword id="KW-0863">Zinc-finger</keyword>
<comment type="subcellular location">
    <subcellularLocation>
        <location evidence="1">Cytoplasm</location>
    </subcellularLocation>
    <subcellularLocation>
        <location evidence="1">Cytoplasm</location>
        <location evidence="1">Cytoskeleton</location>
    </subcellularLocation>
    <text evidence="1">Microtubule-associated.</text>
</comment>
<feature type="chain" id="PRO_0000256865" description="Tripartite motif-containing protein 67">
    <location>
        <begin position="1"/>
        <end position="768"/>
    </location>
</feature>
<feature type="domain" description="COS" evidence="6">
    <location>
        <begin position="435"/>
        <end position="493"/>
    </location>
</feature>
<feature type="domain" description="Fibronectin type-III" evidence="4">
    <location>
        <begin position="498"/>
        <end position="592"/>
    </location>
</feature>
<feature type="domain" description="B30.2/SPRY" evidence="5">
    <location>
        <begin position="574"/>
        <end position="765"/>
    </location>
</feature>
<feature type="zinc finger region" description="RING-type; degenerate">
    <location>
        <begin position="7"/>
        <end position="42"/>
    </location>
</feature>
<feature type="zinc finger region" description="B box-type 1; degenerate" evidence="3">
    <location>
        <begin position="201"/>
        <end position="248"/>
    </location>
</feature>
<feature type="zinc finger region" description="B box-type 2" evidence="3">
    <location>
        <begin position="285"/>
        <end position="327"/>
    </location>
</feature>
<feature type="region of interest" description="Disordered" evidence="7">
    <location>
        <begin position="55"/>
        <end position="74"/>
    </location>
</feature>
<feature type="region of interest" description="Disordered" evidence="7">
    <location>
        <begin position="247"/>
        <end position="284"/>
    </location>
</feature>
<feature type="coiled-coil region" evidence="2">
    <location>
        <begin position="332"/>
        <end position="369"/>
    </location>
</feature>
<feature type="compositionally biased region" description="Low complexity" evidence="7">
    <location>
        <begin position="55"/>
        <end position="70"/>
    </location>
</feature>
<feature type="compositionally biased region" description="Pro residues" evidence="7">
    <location>
        <begin position="247"/>
        <end position="257"/>
    </location>
</feature>
<feature type="binding site" evidence="3">
    <location>
        <position position="290"/>
    </location>
    <ligand>
        <name>Zn(2+)</name>
        <dbReference type="ChEBI" id="CHEBI:29105"/>
    </ligand>
</feature>
<feature type="binding site" evidence="3">
    <location>
        <position position="293"/>
    </location>
    <ligand>
        <name>Zn(2+)</name>
        <dbReference type="ChEBI" id="CHEBI:29105"/>
    </ligand>
</feature>
<feature type="binding site" evidence="3">
    <location>
        <position position="313"/>
    </location>
    <ligand>
        <name>Zn(2+)</name>
        <dbReference type="ChEBI" id="CHEBI:29105"/>
    </ligand>
</feature>
<feature type="binding site" evidence="3">
    <location>
        <position position="319"/>
    </location>
    <ligand>
        <name>Zn(2+)</name>
        <dbReference type="ChEBI" id="CHEBI:29105"/>
    </ligand>
</feature>
<sequence>MEEELKCPVCGSLFREPIILPCSHNVCLPCARTIAVQTPDGEQHLPPPLLLSRGAAAAATPPDQDAAAGATSGGAGANTAGGLGGGATGGGDHADKLSLYSETDSGYGSYTPSLKSPNGVRVLPMVPAPPGSSAAAARGAACSSLCSSSSSITCPQCHRSASLDHRGLRGFQRNRLLEGIVQRYQQGRGVVPGAAAAPAVAICQLCDRTPPEPAATLCEQCDVLYCATCQLKCHPSRGPFAKHRLVQPPPPPTPPEATPAVTGTSTASSAGGCRSPGGAGASAPRKFPTCPEHEMENYSMYCVSCRSPVCYMCLEEGRHSKHEVKPLGATWKQHKAQLSQALNGVSDKAKEAKEFLVQLKNILQQIQENGLDYEACLVAQCDALVDALTRQKAKLLTKVTKEREHKLKMVWDQINHCTLKLRQSTGLMEYCLEVIKEDDPSGFLQISDALIKRVQTSQEQWVKGALEPKVSAEFDLTLDSEPLLQAIHQLDFVQMKLPPVPLLQLEKCCTRNNSVTLAWRTPPFTHSPAEGYILELDDGDGGQFREVYVGKETLCTIDGLHFNSTYNARVKAFNSSGVGPYSKTVVLQTSDVAWFTFDPNSGHRDIILSNDNQTATCSSYDDRVVLGTAAFSKGVHYWELHVDRYDNHPDPAFGVARASVVKDMMLGKDDKAWAMYVDNNRSWFMHCNSHTNRTEGGVCKGATVGVLLDLNKHTLTFFINGQQQGPTAFSHVDGVFMPALSLNRNVQVTLHTGLEVPTNLGRPKLSGN</sequence>
<gene>
    <name type="primary">Trim67</name>
</gene>
<proteinExistence type="evidence at transcript level"/>